<name>SCNNA_NEOFS</name>
<dbReference type="EMBL" id="AB675922">
    <property type="protein sequence ID" value="BAL46406.1"/>
    <property type="molecule type" value="mRNA"/>
</dbReference>
<dbReference type="SMR" id="H1AFJ5"/>
<dbReference type="GO" id="GO:0001669">
    <property type="term" value="C:acrosomal vesicle"/>
    <property type="evidence" value="ECO:0007669"/>
    <property type="project" value="UniProtKB-SubCell"/>
</dbReference>
<dbReference type="GO" id="GO:0016324">
    <property type="term" value="C:apical plasma membrane"/>
    <property type="evidence" value="ECO:0000314"/>
    <property type="project" value="UniProtKB"/>
</dbReference>
<dbReference type="GO" id="GO:0005737">
    <property type="term" value="C:cytoplasm"/>
    <property type="evidence" value="ECO:0000250"/>
    <property type="project" value="UniProtKB"/>
</dbReference>
<dbReference type="GO" id="GO:0031514">
    <property type="term" value="C:motile cilium"/>
    <property type="evidence" value="ECO:0007669"/>
    <property type="project" value="UniProtKB-SubCell"/>
</dbReference>
<dbReference type="GO" id="GO:0034706">
    <property type="term" value="C:sodium channel complex"/>
    <property type="evidence" value="ECO:0000305"/>
    <property type="project" value="UniProtKB"/>
</dbReference>
<dbReference type="GO" id="GO:0015280">
    <property type="term" value="F:ligand-gated sodium channel activity"/>
    <property type="evidence" value="ECO:0007669"/>
    <property type="project" value="InterPro"/>
</dbReference>
<dbReference type="GO" id="GO:0035725">
    <property type="term" value="P:sodium ion transmembrane transport"/>
    <property type="evidence" value="ECO:0000314"/>
    <property type="project" value="UniProtKB"/>
</dbReference>
<dbReference type="FunFam" id="2.60.470.10:FF:000002">
    <property type="entry name" value="Amiloride-sensitive sodium channel subunit alpha"/>
    <property type="match status" value="1"/>
</dbReference>
<dbReference type="Gene3D" id="2.60.470.10">
    <property type="entry name" value="Acid-sensing ion channels like domains"/>
    <property type="match status" value="1"/>
</dbReference>
<dbReference type="Gene3D" id="1.10.287.770">
    <property type="entry name" value="YojJ-like"/>
    <property type="match status" value="1"/>
</dbReference>
<dbReference type="InterPro" id="IPR001873">
    <property type="entry name" value="ENaC"/>
</dbReference>
<dbReference type="InterPro" id="IPR004724">
    <property type="entry name" value="ENaC_chordates"/>
</dbReference>
<dbReference type="InterPro" id="IPR020903">
    <property type="entry name" value="ENaC_CS"/>
</dbReference>
<dbReference type="NCBIfam" id="TIGR00859">
    <property type="entry name" value="ENaC"/>
    <property type="match status" value="1"/>
</dbReference>
<dbReference type="PANTHER" id="PTHR11690:SF124">
    <property type="entry name" value="AMILORIDE-SENSITIVE SODIUM CHANNEL SUBUNIT ALPHA"/>
    <property type="match status" value="1"/>
</dbReference>
<dbReference type="PANTHER" id="PTHR11690">
    <property type="entry name" value="AMILORIDE-SENSITIVE SODIUM CHANNEL-RELATED"/>
    <property type="match status" value="1"/>
</dbReference>
<dbReference type="Pfam" id="PF00858">
    <property type="entry name" value="ASC"/>
    <property type="match status" value="1"/>
</dbReference>
<dbReference type="PRINTS" id="PR01078">
    <property type="entry name" value="AMINACHANNEL"/>
</dbReference>
<dbReference type="PROSITE" id="PS01206">
    <property type="entry name" value="ASC"/>
    <property type="match status" value="1"/>
</dbReference>
<evidence type="ECO:0000250" key="1">
    <source>
        <dbReference type="UniProtKB" id="P37088"/>
    </source>
</evidence>
<evidence type="ECO:0000250" key="2">
    <source>
        <dbReference type="UniProtKB" id="P37089"/>
    </source>
</evidence>
<evidence type="ECO:0000255" key="3"/>
<evidence type="ECO:0000256" key="4">
    <source>
        <dbReference type="SAM" id="MobiDB-lite"/>
    </source>
</evidence>
<evidence type="ECO:0000269" key="5">
    <source>
    </source>
</evidence>
<evidence type="ECO:0000305" key="6"/>
<evidence type="ECO:0000305" key="7">
    <source>
    </source>
</evidence>
<evidence type="ECO:0000312" key="8">
    <source>
        <dbReference type="EMBL" id="BAL46406.1"/>
    </source>
</evidence>
<organism>
    <name type="scientific">Neoceratodus forsteri</name>
    <name type="common">Australian lungfish</name>
    <name type="synonym">Ceratodus forsteri</name>
    <dbReference type="NCBI Taxonomy" id="7892"/>
    <lineage>
        <taxon>Eukaryota</taxon>
        <taxon>Metazoa</taxon>
        <taxon>Chordata</taxon>
        <taxon>Craniata</taxon>
        <taxon>Vertebrata</taxon>
        <taxon>Euteleostomi</taxon>
        <taxon>Dipnomorpha</taxon>
        <taxon>Ceratodontiformes</taxon>
        <taxon>Ceratodontoidei</taxon>
        <taxon>Ceratodontidae</taxon>
        <taxon>Neoceratodus</taxon>
    </lineage>
</organism>
<comment type="function">
    <text evidence="5">This is one of the three pore-forming subunits of the heterotrimeric epithelial sodium channel (ENaC), a critical regulator of sodium balance and fluid homeostasis. ENaC operates in epithelial tissues, where it mediates the electrodiffusion of sodium ions from extracellular fluid through the apical membrane of cells, with water following osmotically.</text>
</comment>
<comment type="catalytic activity">
    <reaction evidence="5">
        <text>Na(+)(in) = Na(+)(out)</text>
        <dbReference type="Rhea" id="RHEA:34963"/>
        <dbReference type="ChEBI" id="CHEBI:29101"/>
    </reaction>
</comment>
<comment type="activity regulation">
    <text evidence="5">Originally identified and characterized by its inhibition by the diuretic drug amiloride.</text>
</comment>
<comment type="subunit">
    <text evidence="1">Heterotrimer; containing an alpha/SCNN1A, a beta/SCNN1B and a gamma/SCNN1G subunit.</text>
</comment>
<comment type="subcellular location">
    <subcellularLocation>
        <location evidence="5">Apical cell membrane</location>
        <topology evidence="2">Multi-pass membrane protein</topology>
    </subcellularLocation>
    <subcellularLocation>
        <location evidence="1">Cell projection</location>
        <location evidence="1">Cilium</location>
    </subcellularLocation>
    <subcellularLocation>
        <location evidence="1">Cytoplasmic granule</location>
    </subcellularLocation>
    <subcellularLocation>
        <location evidence="1">Cytoplasm</location>
    </subcellularLocation>
    <subcellularLocation>
        <location evidence="2">Cytoplasmic vesicle</location>
        <location evidence="2">Secretory vesicle</location>
        <location evidence="2">Acrosome</location>
    </subcellularLocation>
    <subcellularLocation>
        <location evidence="2">Cell projection</location>
        <location evidence="2">Cilium</location>
        <location evidence="2">Flagellum</location>
    </subcellularLocation>
</comment>
<comment type="tissue specificity">
    <text evidence="5">Strongly expressed in gill, kidney and rectum (at protein level). More weakly expressed in muscle, brain, heart, liver and intestine.</text>
</comment>
<comment type="similarity">
    <text evidence="6">Belongs to the amiloride-sensitive sodium channel (TC 1.A.6) family. SCNN1A subfamily.</text>
</comment>
<reference key="1">
    <citation type="journal article" date="2012" name="Proc. R. Soc. B">
        <title>The epithelial sodium channel in the Australian lungfish, Neoceratodus forsteri (Osteichthyes: Dipnoi).</title>
        <authorList>
            <person name="Uchiyama M."/>
            <person name="Maejima S."/>
            <person name="Yoshie S."/>
            <person name="Kubo Y."/>
            <person name="Konno N."/>
            <person name="Joss J.M.P."/>
        </authorList>
    </citation>
    <scope>NUCLEOTIDE SEQUENCE [MRNA]</scope>
    <scope>FUNCTION</scope>
    <scope>TRANSPORTER ACTIVITY</scope>
    <scope>ACTIVITY REGULATION</scope>
    <scope>SUBCELLULAR LOCATION</scope>
    <scope>TISSUE SPECIFICITY</scope>
    <source>
        <tissue>Gill</tissue>
    </source>
</reference>
<protein>
    <recommendedName>
        <fullName evidence="7">Epithelial sodium channel subunit alpha</fullName>
        <shortName>Alpha-ENaC</shortName>
        <shortName>Epithelial Na(+) channel subunit alpha</shortName>
    </recommendedName>
    <alternativeName>
        <fullName>Alpha-NaCH</fullName>
    </alternativeName>
    <alternativeName>
        <fullName evidence="7">Amiloride-sensitive sodium channel subunit alpha</fullName>
    </alternativeName>
    <alternativeName>
        <fullName>Nonvoltage-gated sodium channel 1 subunit alpha</fullName>
    </alternativeName>
    <alternativeName>
        <fullName evidence="1">SCNEA</fullName>
    </alternativeName>
</protein>
<keyword id="KW-1003">Cell membrane</keyword>
<keyword id="KW-0966">Cell projection</keyword>
<keyword id="KW-0969">Cilium</keyword>
<keyword id="KW-0963">Cytoplasm</keyword>
<keyword id="KW-0968">Cytoplasmic vesicle</keyword>
<keyword id="KW-1015">Disulfide bond</keyword>
<keyword id="KW-0282">Flagellum</keyword>
<keyword id="KW-0407">Ion channel</keyword>
<keyword id="KW-0406">Ion transport</keyword>
<keyword id="KW-0472">Membrane</keyword>
<keyword id="KW-0915">Sodium</keyword>
<keyword id="KW-0894">Sodium channel</keyword>
<keyword id="KW-0739">Sodium transport</keyword>
<keyword id="KW-0812">Transmembrane</keyword>
<keyword id="KW-1133">Transmembrane helix</keyword>
<keyword id="KW-0813">Transport</keyword>
<feature type="chain" id="PRO_0000433086" description="Epithelial sodium channel subunit alpha">
    <location>
        <begin position="1"/>
        <end position="655"/>
    </location>
</feature>
<feature type="topological domain" description="Cytoplasmic" evidence="2">
    <location>
        <begin position="1"/>
        <end position="55"/>
    </location>
</feature>
<feature type="transmembrane region" description="Helical; Name=1" evidence="3">
    <location>
        <begin position="56"/>
        <end position="76"/>
    </location>
</feature>
<feature type="topological domain" description="Extracellular" evidence="2">
    <location>
        <begin position="77"/>
        <end position="531"/>
    </location>
</feature>
<feature type="transmembrane region" description="Helical; Name=2" evidence="3">
    <location>
        <begin position="532"/>
        <end position="552"/>
    </location>
</feature>
<feature type="topological domain" description="Cytoplasmic" evidence="2">
    <location>
        <begin position="553"/>
        <end position="655"/>
    </location>
</feature>
<feature type="region of interest" description="Disordered" evidence="4">
    <location>
        <begin position="561"/>
        <end position="587"/>
    </location>
</feature>
<feature type="compositionally biased region" description="Polar residues" evidence="4">
    <location>
        <begin position="562"/>
        <end position="586"/>
    </location>
</feature>
<feature type="disulfide bond" evidence="1">
    <location>
        <begin position="102"/>
        <end position="275"/>
    </location>
</feature>
<feature type="disulfide bond" evidence="1">
    <location>
        <begin position="199"/>
        <end position="206"/>
    </location>
</feature>
<feature type="disulfide bond" evidence="1">
    <location>
        <begin position="252"/>
        <end position="259"/>
    </location>
</feature>
<feature type="disulfide bond" evidence="1">
    <location>
        <begin position="364"/>
        <end position="448"/>
    </location>
</feature>
<feature type="disulfide bond" evidence="1">
    <location>
        <begin position="385"/>
        <end position="444"/>
    </location>
</feature>
<feature type="disulfide bond" evidence="1">
    <location>
        <begin position="385"/>
        <end position="425"/>
    </location>
</feature>
<feature type="disulfide bond" evidence="1">
    <location>
        <begin position="389"/>
        <end position="440"/>
    </location>
</feature>
<feature type="disulfide bond" evidence="1">
    <location>
        <begin position="398"/>
        <end position="448"/>
    </location>
</feature>
<feature type="disulfide bond" evidence="1">
    <location>
        <begin position="398"/>
        <end position="425"/>
    </location>
</feature>
<feature type="disulfide bond" evidence="1">
    <location>
        <begin position="400"/>
        <end position="414"/>
    </location>
</feature>
<accession>H1AFJ5</accession>
<proteinExistence type="evidence at protein level"/>
<gene>
    <name type="primary">scnn1a</name>
    <name evidence="8" type="synonym">enacalpha</name>
</gene>
<sequence>MTDKEEEAEGGKKKEPMIGFYDSYQELFEFFCNNTTIHGTIRMVCSKHNNMKTVSWTILFITTFGVMYWQFGLLLGQYYSYPVSITMSVNFDKLIFPAVTVCTLNPYRYNVVSTQLANLDCYTEELLSTLYHYNPLTSGNQSACNSSSTAGTRAFDESYMKLEFLNDENTAYSGPVKGATNSTSPVNHTEFYRIGFKLCNATGEDCFYQTYSSGVDALREWYKFQYINIMAQIPSQSNQEDDSQISNFVYACEFNKVSCGVENYTRFRHPVYGNCYTYNDGQSATPWASFVPGVGNGLSLVLRTEQNDFLPFLSTVAGARVLVHDQNQPPFMEDSGLDIRPGVETSIGMKKEIISRLGGVYGNCTDGSDIDVVNLYNSDYNQQACVRSCFQATIVQQCGCGYYFYPLPSGAEYCSYSRNKSWGYCYYKLYKAFAADELGCFRRCRKPCQYTDYKMTAGYAQWPSSVSESWITSILSQENQYNMTSGRKNIAKLNVYFYELNYQTMGESPSFTVVTLLSNMGSQWSLWFGSSVLSVVEMGELVFDLIAVGVIVLRRRRREKCQASSDGEGTSDSTAGTHRGQENASRSGRDVACNRFVVVAEISPPPAYDTLQLDVPVACAPDCECTQHVSHASVHSQAPCSSQPEQEASEGPTVL</sequence>